<protein>
    <recommendedName>
        <fullName evidence="1">Small ribosomal subunit protein bS20</fullName>
    </recommendedName>
    <alternativeName>
        <fullName evidence="3">30S ribosomal protein S20</fullName>
    </alternativeName>
</protein>
<accession>Q02GB4</accession>
<comment type="function">
    <text evidence="1">Binds directly to 16S ribosomal RNA.</text>
</comment>
<comment type="similarity">
    <text evidence="1">Belongs to the bacterial ribosomal protein bS20 family.</text>
</comment>
<keyword id="KW-0687">Ribonucleoprotein</keyword>
<keyword id="KW-0689">Ribosomal protein</keyword>
<keyword id="KW-0694">RNA-binding</keyword>
<keyword id="KW-0699">rRNA-binding</keyword>
<sequence length="91" mass="9918">MANTPSAKKRAKQAEKRRSHNASLRSMVRTYIKNVVKAIDAKDLEKAQAAFTAAVPVIDRMADKGIIHKNKAARHKSRLSGHIKALSTAAA</sequence>
<reference key="1">
    <citation type="journal article" date="2006" name="Genome Biol.">
        <title>Genomic analysis reveals that Pseudomonas aeruginosa virulence is combinatorial.</title>
        <authorList>
            <person name="Lee D.G."/>
            <person name="Urbach J.M."/>
            <person name="Wu G."/>
            <person name="Liberati N.T."/>
            <person name="Feinbaum R.L."/>
            <person name="Miyata S."/>
            <person name="Diggins L.T."/>
            <person name="He J."/>
            <person name="Saucier M."/>
            <person name="Deziel E."/>
            <person name="Friedman L."/>
            <person name="Li L."/>
            <person name="Grills G."/>
            <person name="Montgomery K."/>
            <person name="Kucherlapati R."/>
            <person name="Rahme L.G."/>
            <person name="Ausubel F.M."/>
        </authorList>
    </citation>
    <scope>NUCLEOTIDE SEQUENCE [LARGE SCALE GENOMIC DNA]</scope>
    <source>
        <strain>UCBPP-PA14</strain>
    </source>
</reference>
<name>RS20_PSEAB</name>
<evidence type="ECO:0000255" key="1">
    <source>
        <dbReference type="HAMAP-Rule" id="MF_00500"/>
    </source>
</evidence>
<evidence type="ECO:0000256" key="2">
    <source>
        <dbReference type="SAM" id="MobiDB-lite"/>
    </source>
</evidence>
<evidence type="ECO:0000305" key="3"/>
<proteinExistence type="inferred from homology"/>
<gene>
    <name evidence="1" type="primary">rpsT</name>
    <name type="ordered locus">PA14_60400</name>
</gene>
<feature type="chain" id="PRO_1000014631" description="Small ribosomal subunit protein bS20">
    <location>
        <begin position="1"/>
        <end position="91"/>
    </location>
</feature>
<feature type="region of interest" description="Disordered" evidence="2">
    <location>
        <begin position="1"/>
        <end position="23"/>
    </location>
</feature>
<feature type="compositionally biased region" description="Basic residues" evidence="2">
    <location>
        <begin position="7"/>
        <end position="20"/>
    </location>
</feature>
<dbReference type="EMBL" id="CP000438">
    <property type="protein sequence ID" value="ABJ13942.1"/>
    <property type="molecule type" value="Genomic_DNA"/>
</dbReference>
<dbReference type="RefSeq" id="WP_003094744.1">
    <property type="nucleotide sequence ID" value="NZ_CP034244.1"/>
</dbReference>
<dbReference type="SMR" id="Q02GB4"/>
<dbReference type="KEGG" id="pau:PA14_60400"/>
<dbReference type="PseudoCAP" id="PA14_60400"/>
<dbReference type="HOGENOM" id="CLU_160655_4_0_6"/>
<dbReference type="BioCyc" id="PAER208963:G1G74-5107-MONOMER"/>
<dbReference type="Proteomes" id="UP000000653">
    <property type="component" value="Chromosome"/>
</dbReference>
<dbReference type="GO" id="GO:0005829">
    <property type="term" value="C:cytosol"/>
    <property type="evidence" value="ECO:0007669"/>
    <property type="project" value="TreeGrafter"/>
</dbReference>
<dbReference type="GO" id="GO:0015935">
    <property type="term" value="C:small ribosomal subunit"/>
    <property type="evidence" value="ECO:0007669"/>
    <property type="project" value="TreeGrafter"/>
</dbReference>
<dbReference type="GO" id="GO:0070181">
    <property type="term" value="F:small ribosomal subunit rRNA binding"/>
    <property type="evidence" value="ECO:0007669"/>
    <property type="project" value="TreeGrafter"/>
</dbReference>
<dbReference type="GO" id="GO:0003735">
    <property type="term" value="F:structural constituent of ribosome"/>
    <property type="evidence" value="ECO:0007669"/>
    <property type="project" value="InterPro"/>
</dbReference>
<dbReference type="GO" id="GO:0006412">
    <property type="term" value="P:translation"/>
    <property type="evidence" value="ECO:0007669"/>
    <property type="project" value="UniProtKB-UniRule"/>
</dbReference>
<dbReference type="FunFam" id="1.20.58.110:FF:000001">
    <property type="entry name" value="30S ribosomal protein S20"/>
    <property type="match status" value="1"/>
</dbReference>
<dbReference type="Gene3D" id="1.20.58.110">
    <property type="entry name" value="Ribosomal protein S20"/>
    <property type="match status" value="1"/>
</dbReference>
<dbReference type="HAMAP" id="MF_00500">
    <property type="entry name" value="Ribosomal_bS20"/>
    <property type="match status" value="1"/>
</dbReference>
<dbReference type="InterPro" id="IPR002583">
    <property type="entry name" value="Ribosomal_bS20"/>
</dbReference>
<dbReference type="InterPro" id="IPR036510">
    <property type="entry name" value="Ribosomal_bS20_sf"/>
</dbReference>
<dbReference type="NCBIfam" id="TIGR00029">
    <property type="entry name" value="S20"/>
    <property type="match status" value="1"/>
</dbReference>
<dbReference type="PANTHER" id="PTHR33398">
    <property type="entry name" value="30S RIBOSOMAL PROTEIN S20"/>
    <property type="match status" value="1"/>
</dbReference>
<dbReference type="PANTHER" id="PTHR33398:SF1">
    <property type="entry name" value="SMALL RIBOSOMAL SUBUNIT PROTEIN BS20C"/>
    <property type="match status" value="1"/>
</dbReference>
<dbReference type="Pfam" id="PF01649">
    <property type="entry name" value="Ribosomal_S20p"/>
    <property type="match status" value="1"/>
</dbReference>
<dbReference type="SUPFAM" id="SSF46992">
    <property type="entry name" value="Ribosomal protein S20"/>
    <property type="match status" value="1"/>
</dbReference>
<organism>
    <name type="scientific">Pseudomonas aeruginosa (strain UCBPP-PA14)</name>
    <dbReference type="NCBI Taxonomy" id="208963"/>
    <lineage>
        <taxon>Bacteria</taxon>
        <taxon>Pseudomonadati</taxon>
        <taxon>Pseudomonadota</taxon>
        <taxon>Gammaproteobacteria</taxon>
        <taxon>Pseudomonadales</taxon>
        <taxon>Pseudomonadaceae</taxon>
        <taxon>Pseudomonas</taxon>
    </lineage>
</organism>